<reference key="1">
    <citation type="journal article" date="2018" name="Angew. Chem. Int. Ed.">
        <title>Genome mining and comparative biosynthesis of meroterpenoids from two phylogenetically distinct fungi.</title>
        <authorList>
            <person name="Zhang X."/>
            <person name="Wang T.T."/>
            <person name="Xu Q.L."/>
            <person name="Xiong Y."/>
            <person name="Zhang L."/>
            <person name="Han H."/>
            <person name="Xu K."/>
            <person name="Guo W.J."/>
            <person name="Xu Q."/>
            <person name="Tan R.X."/>
            <person name="Ge H.M."/>
        </authorList>
    </citation>
    <scope>NUCLEOTIDE SEQUENCE [MRNA]</scope>
    <scope>FUNCTION</scope>
    <scope>PATHWAY</scope>
    <source>
        <strain>Z14-w</strain>
    </source>
</reference>
<gene>
    <name evidence="3" type="primary">ntnL</name>
</gene>
<feature type="chain" id="PRO_0000452571" description="NAD(P)H-dependent FMN reductase ntnL">
    <location>
        <begin position="1"/>
        <end position="201"/>
    </location>
</feature>
<feature type="binding site" evidence="1">
    <location>
        <position position="12"/>
    </location>
    <ligand>
        <name>FMN</name>
        <dbReference type="ChEBI" id="CHEBI:58210"/>
    </ligand>
</feature>
<feature type="binding site" evidence="1">
    <location>
        <begin position="90"/>
        <end position="93"/>
    </location>
    <ligand>
        <name>FMN</name>
        <dbReference type="ChEBI" id="CHEBI:58210"/>
    </ligand>
</feature>
<feature type="binding site" evidence="1">
    <location>
        <position position="120"/>
    </location>
    <ligand>
        <name>FMN</name>
        <dbReference type="ChEBI" id="CHEBI:58210"/>
    </ligand>
</feature>
<accession>A0A455LN84</accession>
<name>NTNL_NECSZ</name>
<evidence type="ECO:0000250" key="1">
    <source>
        <dbReference type="UniProtKB" id="Q07923"/>
    </source>
</evidence>
<evidence type="ECO:0000269" key="2">
    <source>
    </source>
</evidence>
<evidence type="ECO:0000303" key="3">
    <source>
    </source>
</evidence>
<evidence type="ECO:0000305" key="4">
    <source>
    </source>
</evidence>
<dbReference type="EC" id="1.5.1.39" evidence="4"/>
<dbReference type="EMBL" id="MH183005">
    <property type="protein sequence ID" value="AYO60872.1"/>
    <property type="molecule type" value="mRNA"/>
</dbReference>
<dbReference type="SMR" id="A0A455LN84"/>
<dbReference type="UniPathway" id="UPA00213"/>
<dbReference type="GO" id="GO:0005829">
    <property type="term" value="C:cytosol"/>
    <property type="evidence" value="ECO:0007669"/>
    <property type="project" value="TreeGrafter"/>
</dbReference>
<dbReference type="GO" id="GO:0010181">
    <property type="term" value="F:FMN binding"/>
    <property type="evidence" value="ECO:0007669"/>
    <property type="project" value="TreeGrafter"/>
</dbReference>
<dbReference type="GO" id="GO:0008752">
    <property type="term" value="F:FMN reductase [NAD(P)H] activity"/>
    <property type="evidence" value="ECO:0007669"/>
    <property type="project" value="UniProtKB-EC"/>
</dbReference>
<dbReference type="GO" id="GO:0016114">
    <property type="term" value="P:terpenoid biosynthetic process"/>
    <property type="evidence" value="ECO:0007669"/>
    <property type="project" value="UniProtKB-UniPathway"/>
</dbReference>
<dbReference type="Gene3D" id="3.40.50.360">
    <property type="match status" value="1"/>
</dbReference>
<dbReference type="InterPro" id="IPR029039">
    <property type="entry name" value="Flavoprotein-like_sf"/>
</dbReference>
<dbReference type="InterPro" id="IPR005025">
    <property type="entry name" value="FMN_Rdtase-like_dom"/>
</dbReference>
<dbReference type="InterPro" id="IPR050712">
    <property type="entry name" value="NAD(P)H-dep_reductase"/>
</dbReference>
<dbReference type="PANTHER" id="PTHR30543">
    <property type="entry name" value="CHROMATE REDUCTASE"/>
    <property type="match status" value="1"/>
</dbReference>
<dbReference type="PANTHER" id="PTHR30543:SF21">
    <property type="entry name" value="NAD(P)H-DEPENDENT FMN REDUCTASE LOT6"/>
    <property type="match status" value="1"/>
</dbReference>
<dbReference type="Pfam" id="PF03358">
    <property type="entry name" value="FMN_red"/>
    <property type="match status" value="1"/>
</dbReference>
<dbReference type="SUPFAM" id="SSF52218">
    <property type="entry name" value="Flavoproteins"/>
    <property type="match status" value="1"/>
</dbReference>
<sequence length="201" mass="21931">MAKIALILGSVRSPRVGNDVTGWVHDVLKSRPSDDLQIEPLVIADFNLPVYDEPVMPAMVPAMKQFTKEHSKRWSAAIASYQGYIFVIPEYNGGIAGGTKNAVDYLYNEWPGKPVAIISYGTQGGNRANAQLSESLELVMKMKVAPTKVLLPFAAGTDVFSAINDGVLGEESQKAWAEAGKKEDILKALDEVKELLKQPKE</sequence>
<protein>
    <recommendedName>
        <fullName evidence="3">NAD(P)H-dependent FMN reductase ntnL</fullName>
        <shortName evidence="3">FMN reductase ntnL</shortName>
        <ecNumber evidence="4">1.5.1.39</ecNumber>
    </recommendedName>
    <alternativeName>
        <fullName evidence="3">Nectripenoid biosynthesis cluster protein L</fullName>
    </alternativeName>
</protein>
<organism>
    <name type="scientific">Nectria sp</name>
    <dbReference type="NCBI Taxonomy" id="1755444"/>
    <lineage>
        <taxon>Eukaryota</taxon>
        <taxon>Fungi</taxon>
        <taxon>Dikarya</taxon>
        <taxon>Ascomycota</taxon>
        <taxon>Pezizomycotina</taxon>
        <taxon>Sordariomycetes</taxon>
        <taxon>Hypocreomycetidae</taxon>
        <taxon>Hypocreales</taxon>
        <taxon>Nectriaceae</taxon>
        <taxon>Nectria</taxon>
    </lineage>
</organism>
<comment type="function">
    <text evidence="2 4">NAD(P)H-dependent FMN reductase; part of the gene cluster that mediates the biosynthesis of the meroterpenoids nectripenoids A and B, as well as cochliquninone D and isocochliquninone E (PubMed:29797385). The pathway probably begins with the HR-PKS ntnH that catalyzes two chain-extension steps to form a reduced triketide, which then primes the SAT domain in the NR-PKS ntnG to initiate three more cycles of extension to give a linear hexaketide corresponding to the polyketide part of nectripenoids (Probable). The FAD-dependent monooxygenase ntnJ then performs an oxidative decarboxylation at C11 of the ntnH/ntnG product, via an electrophilic aromatic hydroxylation with concomitant ipso-decarboxylation (Probable). The membrane-bound polyprenyl transferase ntnF then introduces a farnesyl group before the FAD-dependent monooxygenase ntnK functions as the first epoxidase on terminal C12'-C13' olefin, followed by a second epoxidation on C7'-C8' catalyzed by ntnA (Probable). The terpene cyclase/mutase ntnI then initiates the sequential tricyclic ring formation through protonation of the terminal epoxide and catalyzes the regioselective and stereoselective 6/6/6-tricyclic ring formation (Probable). The cytochrome P450 monooxygenase ntnM may then hydroxylate C1' (Probable).</text>
</comment>
<comment type="catalytic activity">
    <reaction>
        <text>FMNH2 + NADP(+) = FMN + NADPH + 2 H(+)</text>
        <dbReference type="Rhea" id="RHEA:21624"/>
        <dbReference type="ChEBI" id="CHEBI:15378"/>
        <dbReference type="ChEBI" id="CHEBI:57618"/>
        <dbReference type="ChEBI" id="CHEBI:57783"/>
        <dbReference type="ChEBI" id="CHEBI:58210"/>
        <dbReference type="ChEBI" id="CHEBI:58349"/>
        <dbReference type="EC" id="1.5.1.39"/>
    </reaction>
</comment>
<comment type="catalytic activity">
    <reaction>
        <text>FMNH2 + NAD(+) = FMN + NADH + 2 H(+)</text>
        <dbReference type="Rhea" id="RHEA:21620"/>
        <dbReference type="ChEBI" id="CHEBI:15378"/>
        <dbReference type="ChEBI" id="CHEBI:57540"/>
        <dbReference type="ChEBI" id="CHEBI:57618"/>
        <dbReference type="ChEBI" id="CHEBI:57945"/>
        <dbReference type="ChEBI" id="CHEBI:58210"/>
        <dbReference type="EC" id="1.5.1.39"/>
    </reaction>
</comment>
<comment type="pathway">
    <text evidence="4">Secondary metabolite biosynthesis; terpenoid biosynthesis.</text>
</comment>
<comment type="subunit">
    <text evidence="1">Homodimer.</text>
</comment>
<keyword id="KW-0285">Flavoprotein</keyword>
<keyword id="KW-0288">FMN</keyword>
<keyword id="KW-0520">NAD</keyword>
<keyword id="KW-0521">NADP</keyword>
<keyword id="KW-0560">Oxidoreductase</keyword>
<proteinExistence type="evidence at transcript level"/>